<keyword id="KW-0238">DNA-binding</keyword>
<keyword id="KW-0391">Immunity</keyword>
<keyword id="KW-0399">Innate immunity</keyword>
<keyword id="KW-0539">Nucleus</keyword>
<keyword id="KW-0611">Plant defense</keyword>
<keyword id="KW-1185">Reference proteome</keyword>
<keyword id="KW-0804">Transcription</keyword>
<keyword id="KW-0805">Transcription regulation</keyword>
<reference key="1">
    <citation type="journal article" date="1998" name="Nature">
        <title>Analysis of 1.9 Mb of contiguous sequence from chromosome 4 of Arabidopsis thaliana.</title>
        <authorList>
            <person name="Bevan M."/>
            <person name="Bancroft I."/>
            <person name="Bent E."/>
            <person name="Love K."/>
            <person name="Goodman H.M."/>
            <person name="Dean C."/>
            <person name="Bergkamp R."/>
            <person name="Dirkse W."/>
            <person name="van Staveren M."/>
            <person name="Stiekema W."/>
            <person name="Drost L."/>
            <person name="Ridley P."/>
            <person name="Hudson S.-A."/>
            <person name="Patel K."/>
            <person name="Murphy G."/>
            <person name="Piffanelli P."/>
            <person name="Wedler H."/>
            <person name="Wedler E."/>
            <person name="Wambutt R."/>
            <person name="Weitzenegger T."/>
            <person name="Pohl T."/>
            <person name="Terryn N."/>
            <person name="Gielen J."/>
            <person name="Villarroel R."/>
            <person name="De Clercq R."/>
            <person name="van Montagu M."/>
            <person name="Lecharny A."/>
            <person name="Aubourg S."/>
            <person name="Gy I."/>
            <person name="Kreis M."/>
            <person name="Lao N."/>
            <person name="Kavanagh T."/>
            <person name="Hempel S."/>
            <person name="Kotter P."/>
            <person name="Entian K.-D."/>
            <person name="Rieger M."/>
            <person name="Schaefer M."/>
            <person name="Funk B."/>
            <person name="Mueller-Auer S."/>
            <person name="Silvey M."/>
            <person name="James R."/>
            <person name="Monfort A."/>
            <person name="Pons A."/>
            <person name="Puigdomenech P."/>
            <person name="Douka A."/>
            <person name="Voukelatou E."/>
            <person name="Milioni D."/>
            <person name="Hatzopoulos P."/>
            <person name="Piravandi E."/>
            <person name="Obermaier B."/>
            <person name="Hilbert H."/>
            <person name="Duesterhoeft A."/>
            <person name="Moores T."/>
            <person name="Jones J.D.G."/>
            <person name="Eneva T."/>
            <person name="Palme K."/>
            <person name="Benes V."/>
            <person name="Rechmann S."/>
            <person name="Ansorge W."/>
            <person name="Cooke R."/>
            <person name="Berger C."/>
            <person name="Delseny M."/>
            <person name="Voet M."/>
            <person name="Volckaert G."/>
            <person name="Mewes H.-W."/>
            <person name="Klosterman S."/>
            <person name="Schueller C."/>
            <person name="Chalwatzis N."/>
        </authorList>
    </citation>
    <scope>NUCLEOTIDE SEQUENCE [LARGE SCALE GENOMIC DNA]</scope>
    <source>
        <strain>cv. Columbia</strain>
    </source>
</reference>
<reference key="2">
    <citation type="journal article" date="1999" name="Nature">
        <title>Sequence and analysis of chromosome 4 of the plant Arabidopsis thaliana.</title>
        <authorList>
            <person name="Mayer K.F.X."/>
            <person name="Schueller C."/>
            <person name="Wambutt R."/>
            <person name="Murphy G."/>
            <person name="Volckaert G."/>
            <person name="Pohl T."/>
            <person name="Duesterhoeft A."/>
            <person name="Stiekema W."/>
            <person name="Entian K.-D."/>
            <person name="Terryn N."/>
            <person name="Harris B."/>
            <person name="Ansorge W."/>
            <person name="Brandt P."/>
            <person name="Grivell L.A."/>
            <person name="Rieger M."/>
            <person name="Weichselgartner M."/>
            <person name="de Simone V."/>
            <person name="Obermaier B."/>
            <person name="Mache R."/>
            <person name="Mueller M."/>
            <person name="Kreis M."/>
            <person name="Delseny M."/>
            <person name="Puigdomenech P."/>
            <person name="Watson M."/>
            <person name="Schmidtheini T."/>
            <person name="Reichert B."/>
            <person name="Portetelle D."/>
            <person name="Perez-Alonso M."/>
            <person name="Boutry M."/>
            <person name="Bancroft I."/>
            <person name="Vos P."/>
            <person name="Hoheisel J."/>
            <person name="Zimmermann W."/>
            <person name="Wedler H."/>
            <person name="Ridley P."/>
            <person name="Langham S.-A."/>
            <person name="McCullagh B."/>
            <person name="Bilham L."/>
            <person name="Robben J."/>
            <person name="van der Schueren J."/>
            <person name="Grymonprez B."/>
            <person name="Chuang Y.-J."/>
            <person name="Vandenbussche F."/>
            <person name="Braeken M."/>
            <person name="Weltjens I."/>
            <person name="Voet M."/>
            <person name="Bastiaens I."/>
            <person name="Aert R."/>
            <person name="Defoor E."/>
            <person name="Weitzenegger T."/>
            <person name="Bothe G."/>
            <person name="Ramsperger U."/>
            <person name="Hilbert H."/>
            <person name="Braun M."/>
            <person name="Holzer E."/>
            <person name="Brandt A."/>
            <person name="Peters S."/>
            <person name="van Staveren M."/>
            <person name="Dirkse W."/>
            <person name="Mooijman P."/>
            <person name="Klein Lankhorst R."/>
            <person name="Rose M."/>
            <person name="Hauf J."/>
            <person name="Koetter P."/>
            <person name="Berneiser S."/>
            <person name="Hempel S."/>
            <person name="Feldpausch M."/>
            <person name="Lamberth S."/>
            <person name="Van den Daele H."/>
            <person name="De Keyser A."/>
            <person name="Buysshaert C."/>
            <person name="Gielen J."/>
            <person name="Villarroel R."/>
            <person name="De Clercq R."/>
            <person name="van Montagu M."/>
            <person name="Rogers J."/>
            <person name="Cronin A."/>
            <person name="Quail M.A."/>
            <person name="Bray-Allen S."/>
            <person name="Clark L."/>
            <person name="Doggett J."/>
            <person name="Hall S."/>
            <person name="Kay M."/>
            <person name="Lennard N."/>
            <person name="McLay K."/>
            <person name="Mayes R."/>
            <person name="Pettett A."/>
            <person name="Rajandream M.A."/>
            <person name="Lyne M."/>
            <person name="Benes V."/>
            <person name="Rechmann S."/>
            <person name="Borkova D."/>
            <person name="Bloecker H."/>
            <person name="Scharfe M."/>
            <person name="Grimm M."/>
            <person name="Loehnert T.-H."/>
            <person name="Dose S."/>
            <person name="de Haan M."/>
            <person name="Maarse A.C."/>
            <person name="Schaefer M."/>
            <person name="Mueller-Auer S."/>
            <person name="Gabel C."/>
            <person name="Fuchs M."/>
            <person name="Fartmann B."/>
            <person name="Granderath K."/>
            <person name="Dauner D."/>
            <person name="Herzl A."/>
            <person name="Neumann S."/>
            <person name="Argiriou A."/>
            <person name="Vitale D."/>
            <person name="Liguori R."/>
            <person name="Piravandi E."/>
            <person name="Massenet O."/>
            <person name="Quigley F."/>
            <person name="Clabauld G."/>
            <person name="Muendlein A."/>
            <person name="Felber R."/>
            <person name="Schnabl S."/>
            <person name="Hiller R."/>
            <person name="Schmidt W."/>
            <person name="Lecharny A."/>
            <person name="Aubourg S."/>
            <person name="Chefdor F."/>
            <person name="Cooke R."/>
            <person name="Berger C."/>
            <person name="Monfort A."/>
            <person name="Casacuberta E."/>
            <person name="Gibbons T."/>
            <person name="Weber N."/>
            <person name="Vandenbol M."/>
            <person name="Bargues M."/>
            <person name="Terol J."/>
            <person name="Torres A."/>
            <person name="Perez-Perez A."/>
            <person name="Purnelle B."/>
            <person name="Bent E."/>
            <person name="Johnson S."/>
            <person name="Tacon D."/>
            <person name="Jesse T."/>
            <person name="Heijnen L."/>
            <person name="Schwarz S."/>
            <person name="Scholler P."/>
            <person name="Heber S."/>
            <person name="Francs P."/>
            <person name="Bielke C."/>
            <person name="Frishman D."/>
            <person name="Haase D."/>
            <person name="Lemcke K."/>
            <person name="Mewes H.-W."/>
            <person name="Stocker S."/>
            <person name="Zaccaria P."/>
            <person name="Bevan M."/>
            <person name="Wilson R.K."/>
            <person name="de la Bastide M."/>
            <person name="Habermann K."/>
            <person name="Parnell L."/>
            <person name="Dedhia N."/>
            <person name="Gnoj L."/>
            <person name="Schutz K."/>
            <person name="Huang E."/>
            <person name="Spiegel L."/>
            <person name="Sekhon M."/>
            <person name="Murray J."/>
            <person name="Sheet P."/>
            <person name="Cordes M."/>
            <person name="Abu-Threideh J."/>
            <person name="Stoneking T."/>
            <person name="Kalicki J."/>
            <person name="Graves T."/>
            <person name="Harmon G."/>
            <person name="Edwards J."/>
            <person name="Latreille P."/>
            <person name="Courtney L."/>
            <person name="Cloud J."/>
            <person name="Abbott A."/>
            <person name="Scott K."/>
            <person name="Johnson D."/>
            <person name="Minx P."/>
            <person name="Bentley D."/>
            <person name="Fulton B."/>
            <person name="Miller N."/>
            <person name="Greco T."/>
            <person name="Kemp K."/>
            <person name="Kramer J."/>
            <person name="Fulton L."/>
            <person name="Mardis E."/>
            <person name="Dante M."/>
            <person name="Pepin K."/>
            <person name="Hillier L.W."/>
            <person name="Nelson J."/>
            <person name="Spieth J."/>
            <person name="Ryan E."/>
            <person name="Andrews S."/>
            <person name="Geisel C."/>
            <person name="Layman D."/>
            <person name="Du H."/>
            <person name="Ali J."/>
            <person name="Berghoff A."/>
            <person name="Jones K."/>
            <person name="Drone K."/>
            <person name="Cotton M."/>
            <person name="Joshu C."/>
            <person name="Antonoiu B."/>
            <person name="Zidanic M."/>
            <person name="Strong C."/>
            <person name="Sun H."/>
            <person name="Lamar B."/>
            <person name="Yordan C."/>
            <person name="Ma P."/>
            <person name="Zhong J."/>
            <person name="Preston R."/>
            <person name="Vil D."/>
            <person name="Shekher M."/>
            <person name="Matero A."/>
            <person name="Shah R."/>
            <person name="Swaby I.K."/>
            <person name="O'Shaughnessy A."/>
            <person name="Rodriguez M."/>
            <person name="Hoffman J."/>
            <person name="Till S."/>
            <person name="Granat S."/>
            <person name="Shohdy N."/>
            <person name="Hasegawa A."/>
            <person name="Hameed A."/>
            <person name="Lodhi M."/>
            <person name="Johnson A."/>
            <person name="Chen E."/>
            <person name="Marra M.A."/>
            <person name="Martienssen R."/>
            <person name="McCombie W.R."/>
        </authorList>
    </citation>
    <scope>NUCLEOTIDE SEQUENCE [LARGE SCALE GENOMIC DNA]</scope>
    <source>
        <strain>cv. Columbia</strain>
    </source>
</reference>
<reference key="3">
    <citation type="journal article" date="2017" name="Plant J.">
        <title>Araport11: a complete reannotation of the Arabidopsis thaliana reference genome.</title>
        <authorList>
            <person name="Cheng C.Y."/>
            <person name="Krishnakumar V."/>
            <person name="Chan A.P."/>
            <person name="Thibaud-Nissen F."/>
            <person name="Schobel S."/>
            <person name="Town C.D."/>
        </authorList>
    </citation>
    <scope>GENOME REANNOTATION</scope>
    <source>
        <strain>cv. Columbia</strain>
    </source>
</reference>
<reference key="4">
    <citation type="journal article" date="2002" name="Science">
        <title>Functional annotation of a full-length Arabidopsis cDNA collection.</title>
        <authorList>
            <person name="Seki M."/>
            <person name="Narusaka M."/>
            <person name="Kamiya A."/>
            <person name="Ishida J."/>
            <person name="Satou M."/>
            <person name="Sakurai T."/>
            <person name="Nakajima M."/>
            <person name="Enju A."/>
            <person name="Akiyama K."/>
            <person name="Oono Y."/>
            <person name="Muramatsu M."/>
            <person name="Hayashizaki Y."/>
            <person name="Kawai J."/>
            <person name="Carninci P."/>
            <person name="Itoh M."/>
            <person name="Ishii Y."/>
            <person name="Arakawa T."/>
            <person name="Shibata K."/>
            <person name="Shinagawa A."/>
            <person name="Shinozaki K."/>
        </authorList>
    </citation>
    <scope>NUCLEOTIDE SEQUENCE [LARGE SCALE MRNA]</scope>
    <source>
        <strain>cv. Columbia</strain>
    </source>
</reference>
<reference key="5">
    <citation type="journal article" date="2003" name="Science">
        <title>Empirical analysis of transcriptional activity in the Arabidopsis genome.</title>
        <authorList>
            <person name="Yamada K."/>
            <person name="Lim J."/>
            <person name="Dale J.M."/>
            <person name="Chen H."/>
            <person name="Shinn P."/>
            <person name="Palm C.J."/>
            <person name="Southwick A.M."/>
            <person name="Wu H.C."/>
            <person name="Kim C.J."/>
            <person name="Nguyen M."/>
            <person name="Pham P.K."/>
            <person name="Cheuk R.F."/>
            <person name="Karlin-Newmann G."/>
            <person name="Liu S.X."/>
            <person name="Lam B."/>
            <person name="Sakano H."/>
            <person name="Wu T."/>
            <person name="Yu G."/>
            <person name="Miranda M."/>
            <person name="Quach H.L."/>
            <person name="Tripp M."/>
            <person name="Chang C.H."/>
            <person name="Lee J.M."/>
            <person name="Toriumi M.J."/>
            <person name="Chan M.M."/>
            <person name="Tang C.C."/>
            <person name="Onodera C.S."/>
            <person name="Deng J.M."/>
            <person name="Akiyama K."/>
            <person name="Ansari Y."/>
            <person name="Arakawa T."/>
            <person name="Banh J."/>
            <person name="Banno F."/>
            <person name="Bowser L."/>
            <person name="Brooks S.Y."/>
            <person name="Carninci P."/>
            <person name="Chao Q."/>
            <person name="Choy N."/>
            <person name="Enju A."/>
            <person name="Goldsmith A.D."/>
            <person name="Gurjal M."/>
            <person name="Hansen N.F."/>
            <person name="Hayashizaki Y."/>
            <person name="Johnson-Hopson C."/>
            <person name="Hsuan V.W."/>
            <person name="Iida K."/>
            <person name="Karnes M."/>
            <person name="Khan S."/>
            <person name="Koesema E."/>
            <person name="Ishida J."/>
            <person name="Jiang P.X."/>
            <person name="Jones T."/>
            <person name="Kawai J."/>
            <person name="Kamiya A."/>
            <person name="Meyers C."/>
            <person name="Nakajima M."/>
            <person name="Narusaka M."/>
            <person name="Seki M."/>
            <person name="Sakurai T."/>
            <person name="Satou M."/>
            <person name="Tamse R."/>
            <person name="Vaysberg M."/>
            <person name="Wallender E.K."/>
            <person name="Wong C."/>
            <person name="Yamamura Y."/>
            <person name="Yuan S."/>
            <person name="Shinozaki K."/>
            <person name="Davis R.W."/>
            <person name="Theologis A."/>
            <person name="Ecker J.R."/>
        </authorList>
    </citation>
    <scope>NUCLEOTIDE SEQUENCE [LARGE SCALE MRNA]</scope>
    <source>
        <strain>cv. Columbia</strain>
    </source>
</reference>
<reference key="6">
    <citation type="submission" date="2006-07" db="EMBL/GenBank/DDBJ databases">
        <title>Large-scale analysis of RIKEN Arabidopsis full-length (RAFL) cDNAs.</title>
        <authorList>
            <person name="Totoki Y."/>
            <person name="Seki M."/>
            <person name="Ishida J."/>
            <person name="Nakajima M."/>
            <person name="Enju A."/>
            <person name="Kamiya A."/>
            <person name="Narusaka M."/>
            <person name="Shin-i T."/>
            <person name="Nakagawa M."/>
            <person name="Sakamoto N."/>
            <person name="Oishi K."/>
            <person name="Kohara Y."/>
            <person name="Kobayashi M."/>
            <person name="Toyoda A."/>
            <person name="Sakaki Y."/>
            <person name="Sakurai T."/>
            <person name="Iida K."/>
            <person name="Akiyama K."/>
            <person name="Satou M."/>
            <person name="Toyoda T."/>
            <person name="Konagaya A."/>
            <person name="Carninci P."/>
            <person name="Kawai J."/>
            <person name="Hayashizaki Y."/>
            <person name="Shinozaki K."/>
        </authorList>
    </citation>
    <scope>NUCLEOTIDE SEQUENCE [LARGE SCALE MRNA]</scope>
    <source>
        <strain>cv. Columbia</strain>
    </source>
</reference>
<reference key="7">
    <citation type="submission" date="2002-03" db="EMBL/GenBank/DDBJ databases">
        <title>Full-length cDNA from Arabidopsis thaliana.</title>
        <authorList>
            <person name="Brover V.V."/>
            <person name="Troukhan M.E."/>
            <person name="Alexandrov N.A."/>
            <person name="Lu Y.-P."/>
            <person name="Flavell R.B."/>
            <person name="Feldmann K.A."/>
        </authorList>
    </citation>
    <scope>NUCLEOTIDE SEQUENCE [LARGE SCALE MRNA]</scope>
</reference>
<reference key="8">
    <citation type="journal article" date="2004" name="Plant Mol. Biol.">
        <title>Identification of a novel plant MAR DNA binding protein localized on chromosomal surfaces.</title>
        <authorList>
            <person name="Fujimoto S."/>
            <person name="Matsunaga S."/>
            <person name="Yonemura M."/>
            <person name="Uchiyama S."/>
            <person name="Azuma T."/>
            <person name="Fukui K."/>
        </authorList>
    </citation>
    <scope>IDENTIFICATION</scope>
    <scope>GENE FAMILY</scope>
    <scope>NOMENCLATURE</scope>
    <source>
        <strain>cv. Columbia</strain>
    </source>
</reference>
<reference key="9">
    <citation type="journal article" date="2010" name="J. Integr. Plant Biol.">
        <title>Overexpression of AHL20 negatively regulates defenses in Arabidopsis.</title>
        <authorList>
            <person name="Lu H."/>
            <person name="Zou Y."/>
            <person name="Feng N."/>
        </authorList>
    </citation>
    <scope>FUNCTION</scope>
</reference>
<reference key="10">
    <citation type="journal article" date="2013" name="Proc. Natl. Acad. Sci. U.S.A.">
        <title>Arabidopsis thaliana AHL family modulates hypocotyl growth redundantly by interacting with each other via the PPC/DUF296 domain.</title>
        <authorList>
            <person name="Zhao J."/>
            <person name="Favero D.S."/>
            <person name="Peng H."/>
            <person name="Neff M.M."/>
        </authorList>
    </citation>
    <scope>GENE FAMILY</scope>
    <scope>DOMAIN PPC</scope>
</reference>
<name>AHL20_ARATH</name>
<gene>
    <name evidence="6" type="primary">AHL20</name>
    <name evidence="7" type="synonym">RNH1</name>
    <name evidence="9" type="ordered locus">At4g14465</name>
    <name evidence="10" type="ORF">FCAALL.196</name>
</gene>
<organism>
    <name type="scientific">Arabidopsis thaliana</name>
    <name type="common">Mouse-ear cress</name>
    <dbReference type="NCBI Taxonomy" id="3702"/>
    <lineage>
        <taxon>Eukaryota</taxon>
        <taxon>Viridiplantae</taxon>
        <taxon>Streptophyta</taxon>
        <taxon>Embryophyta</taxon>
        <taxon>Tracheophyta</taxon>
        <taxon>Spermatophyta</taxon>
        <taxon>Magnoliopsida</taxon>
        <taxon>eudicotyledons</taxon>
        <taxon>Gunneridae</taxon>
        <taxon>Pentapetalae</taxon>
        <taxon>rosids</taxon>
        <taxon>malvids</taxon>
        <taxon>Brassicales</taxon>
        <taxon>Brassicaceae</taxon>
        <taxon>Camelineae</taxon>
        <taxon>Arabidopsis</taxon>
    </lineage>
</organism>
<dbReference type="EMBL" id="Z97336">
    <property type="status" value="NOT_ANNOTATED_CDS"/>
    <property type="molecule type" value="Genomic_DNA"/>
</dbReference>
<dbReference type="EMBL" id="AL161539">
    <property type="status" value="NOT_ANNOTATED_CDS"/>
    <property type="molecule type" value="Genomic_DNA"/>
</dbReference>
<dbReference type="EMBL" id="CP002687">
    <property type="protein sequence ID" value="AEE83448.1"/>
    <property type="molecule type" value="Genomic_DNA"/>
</dbReference>
<dbReference type="EMBL" id="AK118702">
    <property type="protein sequence ID" value="BAC43296.1"/>
    <property type="molecule type" value="mRNA"/>
</dbReference>
<dbReference type="EMBL" id="BT006423">
    <property type="protein sequence ID" value="AAP21231.1"/>
    <property type="molecule type" value="mRNA"/>
</dbReference>
<dbReference type="EMBL" id="AK227935">
    <property type="protein sequence ID" value="BAE99903.1"/>
    <property type="molecule type" value="mRNA"/>
</dbReference>
<dbReference type="EMBL" id="AY087587">
    <property type="protein sequence ID" value="AAM65129.1"/>
    <property type="molecule type" value="mRNA"/>
</dbReference>
<dbReference type="EMBL" id="BR000356">
    <property type="protein sequence ID" value="FAA00291.1"/>
    <property type="molecule type" value="mRNA"/>
</dbReference>
<dbReference type="RefSeq" id="NP_567432.1">
    <property type="nucleotide sequence ID" value="NM_117526.4"/>
</dbReference>
<dbReference type="SMR" id="Q8GWQ2"/>
<dbReference type="FunCoup" id="Q8GWQ2">
    <property type="interactions" value="82"/>
</dbReference>
<dbReference type="IntAct" id="Q8GWQ2">
    <property type="interactions" value="2"/>
</dbReference>
<dbReference type="STRING" id="3702.Q8GWQ2"/>
<dbReference type="iPTMnet" id="Q8GWQ2"/>
<dbReference type="PaxDb" id="3702-AT4G14465.1"/>
<dbReference type="ProteomicsDB" id="245038"/>
<dbReference type="EnsemblPlants" id="AT4G14465.1">
    <property type="protein sequence ID" value="AT4G14465.1"/>
    <property type="gene ID" value="AT4G14465"/>
</dbReference>
<dbReference type="GeneID" id="827093"/>
<dbReference type="Gramene" id="AT4G14465.1">
    <property type="protein sequence ID" value="AT4G14465.1"/>
    <property type="gene ID" value="AT4G14465"/>
</dbReference>
<dbReference type="KEGG" id="ath:AT4G14465"/>
<dbReference type="Araport" id="AT4G14465"/>
<dbReference type="TAIR" id="AT4G14465">
    <property type="gene designation" value="AHL20"/>
</dbReference>
<dbReference type="eggNOG" id="ENOG502QRFG">
    <property type="taxonomic scope" value="Eukaryota"/>
</dbReference>
<dbReference type="HOGENOM" id="CLU_039808_2_0_1"/>
<dbReference type="InParanoid" id="Q8GWQ2"/>
<dbReference type="OMA" id="YTWVHAR"/>
<dbReference type="OrthoDB" id="1932529at2759"/>
<dbReference type="PhylomeDB" id="Q8GWQ2"/>
<dbReference type="PRO" id="PR:Q8GWQ2"/>
<dbReference type="Proteomes" id="UP000006548">
    <property type="component" value="Chromosome 4"/>
</dbReference>
<dbReference type="ExpressionAtlas" id="Q8GWQ2">
    <property type="expression patterns" value="baseline and differential"/>
</dbReference>
<dbReference type="GO" id="GO:0005634">
    <property type="term" value="C:nucleus"/>
    <property type="evidence" value="ECO:0007669"/>
    <property type="project" value="UniProtKB-SubCell"/>
</dbReference>
<dbReference type="GO" id="GO:0003680">
    <property type="term" value="F:minor groove of adenine-thymine-rich DNA binding"/>
    <property type="evidence" value="ECO:0007669"/>
    <property type="project" value="InterPro"/>
</dbReference>
<dbReference type="GO" id="GO:0042742">
    <property type="term" value="P:defense response to bacterium"/>
    <property type="evidence" value="ECO:0000315"/>
    <property type="project" value="TAIR"/>
</dbReference>
<dbReference type="GO" id="GO:0045087">
    <property type="term" value="P:innate immune response"/>
    <property type="evidence" value="ECO:0007669"/>
    <property type="project" value="UniProtKB-KW"/>
</dbReference>
<dbReference type="GO" id="GO:1900425">
    <property type="term" value="P:negative regulation of defense response to bacterium"/>
    <property type="evidence" value="ECO:0000315"/>
    <property type="project" value="UniProtKB"/>
</dbReference>
<dbReference type="GO" id="GO:0045824">
    <property type="term" value="P:negative regulation of innate immune response"/>
    <property type="evidence" value="ECO:0000315"/>
    <property type="project" value="UniProtKB"/>
</dbReference>
<dbReference type="GO" id="GO:2000028">
    <property type="term" value="P:regulation of photoperiodism, flowering"/>
    <property type="evidence" value="ECO:0000315"/>
    <property type="project" value="TAIR"/>
</dbReference>
<dbReference type="CDD" id="cd11378">
    <property type="entry name" value="DUF296"/>
    <property type="match status" value="1"/>
</dbReference>
<dbReference type="FunFam" id="3.30.1330.80:FF:000002">
    <property type="entry name" value="AT-hook motif nuclear-localized protein"/>
    <property type="match status" value="1"/>
</dbReference>
<dbReference type="Gene3D" id="3.30.1330.80">
    <property type="entry name" value="Hypothetical protein, similar to alpha- acetolactate decarboxylase, domain 2"/>
    <property type="match status" value="1"/>
</dbReference>
<dbReference type="InterPro" id="IPR014476">
    <property type="entry name" value="AHL15-29"/>
</dbReference>
<dbReference type="InterPro" id="IPR005175">
    <property type="entry name" value="PPC_dom"/>
</dbReference>
<dbReference type="PANTHER" id="PTHR31100">
    <property type="entry name" value="AT-HOOK MOTIF NUCLEAR-LOCALIZED PROTEIN 15"/>
    <property type="match status" value="1"/>
</dbReference>
<dbReference type="PANTHER" id="PTHR31100:SF3">
    <property type="entry name" value="AT-HOOK MOTIF NUCLEAR-LOCALIZED PROTEIN 20"/>
    <property type="match status" value="1"/>
</dbReference>
<dbReference type="Pfam" id="PF03479">
    <property type="entry name" value="PCC"/>
    <property type="match status" value="1"/>
</dbReference>
<dbReference type="PIRSF" id="PIRSF016021">
    <property type="entry name" value="ESCAROLA"/>
    <property type="match status" value="1"/>
</dbReference>
<dbReference type="SUPFAM" id="SSF117856">
    <property type="entry name" value="AF0104/ALDC/Ptd012-like"/>
    <property type="match status" value="1"/>
</dbReference>
<dbReference type="PROSITE" id="PS51742">
    <property type="entry name" value="PPC"/>
    <property type="match status" value="1"/>
</dbReference>
<feature type="chain" id="PRO_0000432038" description="AT-hook motif nuclear-localized protein 20">
    <location>
        <begin position="1"/>
        <end position="281"/>
    </location>
</feature>
<feature type="domain" description="PPC" evidence="2">
    <location>
        <begin position="91"/>
        <end position="229"/>
    </location>
</feature>
<feature type="DNA-binding region" description="A.T hook" evidence="8">
    <location>
        <begin position="67"/>
        <end position="79"/>
    </location>
</feature>
<feature type="region of interest" description="Disordered" evidence="3">
    <location>
        <begin position="43"/>
        <end position="85"/>
    </location>
</feature>
<feature type="region of interest" description="Disordered" evidence="3">
    <location>
        <begin position="216"/>
        <end position="247"/>
    </location>
</feature>
<proteinExistence type="evidence at transcript level"/>
<sequence>MANPWWTNQSGLAGMVDHSVSSGHHQNHHHQSLLTKGDLGIAMNQSQDNDQDEEDDPREGAVEVVNRRPRGRPPGSKNKPKAPIFVTRDSPNALRSHVLEISDGSDVADTIAHFSRRRQRGVCVLSGTGSVANVTLRQAAAPGGVVSLQGRFEILSLTGAFLPGPSPPGSTGLTVYLAGVQGQVVGGSVVGPLLAIGSVMVIAATFSNATYERLPMEEEEDGGGSRQIHGGGDSPPRIGSNLPDLSGMAGPGYNMPPHLIPNGAGQLGHEPYTWVHARPPY</sequence>
<accession>Q8GWQ2</accession>
<accession>Q8LAV4</accession>
<evidence type="ECO:0000250" key="1">
    <source>
        <dbReference type="UniProtKB" id="Q8VYJ2"/>
    </source>
</evidence>
<evidence type="ECO:0000255" key="2">
    <source>
        <dbReference type="PROSITE-ProRule" id="PRU01078"/>
    </source>
</evidence>
<evidence type="ECO:0000256" key="3">
    <source>
        <dbReference type="SAM" id="MobiDB-lite"/>
    </source>
</evidence>
<evidence type="ECO:0000269" key="4">
    <source>
    </source>
</evidence>
<evidence type="ECO:0000269" key="5">
    <source>
    </source>
</evidence>
<evidence type="ECO:0000303" key="6">
    <source>
    </source>
</evidence>
<evidence type="ECO:0000303" key="7">
    <source>
    </source>
</evidence>
<evidence type="ECO:0000305" key="8"/>
<evidence type="ECO:0000312" key="9">
    <source>
        <dbReference type="Araport" id="AT4G14465"/>
    </source>
</evidence>
<evidence type="ECO:0000312" key="10">
    <source>
        <dbReference type="EMBL" id="AL161539"/>
    </source>
</evidence>
<evidence type="ECO:0000312" key="11">
    <source>
        <dbReference type="EMBL" id="FAA00291.1"/>
    </source>
</evidence>
<comment type="function">
    <text evidence="1 4">Transcription factor that specifically binds AT-rich DNA sequences related to the nuclear matrix attachment regions (MARs) (By similarity). Negatively regulates plant innate immunity (PTI) to pathogens through the down-regulation of the PAMP-triggered NHO1 and FRK1 expression (PubMed:20738724).</text>
</comment>
<comment type="subcellular location">
    <subcellularLocation>
        <location evidence="1">Nucleus</location>
    </subcellularLocation>
</comment>
<comment type="domain">
    <text evidence="5">The PPC domain mediates interactions between AHL proteins.</text>
</comment>
<comment type="miscellaneous">
    <text evidence="4">Overexpression of AHL20 results in a decreased expression of NHO1 and FRK1 and in an enhanced susceptibility to virulent strain DC3000.</text>
</comment>
<protein>
    <recommendedName>
        <fullName evidence="11">AT-hook motif nuclear-localized protein 20</fullName>
    </recommendedName>
</protein>